<protein>
    <recommendedName>
        <fullName>Rho guanine nucleotide exchange factor 12</fullName>
    </recommendedName>
    <alternativeName>
        <fullName>Leukemia-associated RhoGEF</fullName>
    </alternativeName>
</protein>
<dbReference type="EMBL" id="AF467766">
    <property type="protein sequence ID" value="AAL87100.1"/>
    <property type="molecule type" value="mRNA"/>
</dbReference>
<dbReference type="EMBL" id="AK122267">
    <property type="protein sequence ID" value="BAC65549.1"/>
    <property type="status" value="ALT_INIT"/>
    <property type="molecule type" value="mRNA"/>
</dbReference>
<dbReference type="EMBL" id="AC110169">
    <property type="status" value="NOT_ANNOTATED_CDS"/>
    <property type="molecule type" value="Genomic_DNA"/>
</dbReference>
<dbReference type="EMBL" id="AC160123">
    <property type="status" value="NOT_ANNOTATED_CDS"/>
    <property type="molecule type" value="Genomic_DNA"/>
</dbReference>
<dbReference type="CCDS" id="CCDS90543.1"/>
<dbReference type="RefSeq" id="NP_001346161.1">
    <property type="nucleotide sequence ID" value="NM_001359232.1"/>
</dbReference>
<dbReference type="RefSeq" id="XP_006510649.1">
    <property type="nucleotide sequence ID" value="XM_006510586.3"/>
</dbReference>
<dbReference type="BMRB" id="Q8R4H2"/>
<dbReference type="SMR" id="Q8R4H2"/>
<dbReference type="BioGRID" id="213578">
    <property type="interactions" value="24"/>
</dbReference>
<dbReference type="FunCoup" id="Q8R4H2">
    <property type="interactions" value="1745"/>
</dbReference>
<dbReference type="IntAct" id="Q8R4H2">
    <property type="interactions" value="6"/>
</dbReference>
<dbReference type="MINT" id="Q8R4H2"/>
<dbReference type="STRING" id="10090.ENSMUSP00000126598"/>
<dbReference type="GlyGen" id="Q8R4H2">
    <property type="glycosylation" value="1 site, 1 O-linked glycan (1 site)"/>
</dbReference>
<dbReference type="iPTMnet" id="Q8R4H2"/>
<dbReference type="PhosphoSitePlus" id="Q8R4H2"/>
<dbReference type="jPOST" id="Q8R4H2"/>
<dbReference type="PaxDb" id="10090-ENSMUSP00000126598"/>
<dbReference type="PeptideAtlas" id="Q8R4H2"/>
<dbReference type="ProteomicsDB" id="277285"/>
<dbReference type="Pumba" id="Q8R4H2"/>
<dbReference type="Antibodypedia" id="9144">
    <property type="antibodies" value="163 antibodies from 28 providers"/>
</dbReference>
<dbReference type="Ensembl" id="ENSMUST00000072767.7">
    <property type="protein sequence ID" value="ENSMUSP00000072547.7"/>
    <property type="gene ID" value="ENSMUSG00000059495.15"/>
</dbReference>
<dbReference type="GeneID" id="69632"/>
<dbReference type="UCSC" id="uc009pbb.1">
    <property type="organism name" value="mouse"/>
</dbReference>
<dbReference type="AGR" id="MGI:1916882"/>
<dbReference type="MGI" id="MGI:1916882">
    <property type="gene designation" value="Arhgef12"/>
</dbReference>
<dbReference type="VEuPathDB" id="HostDB:ENSMUSG00000059495"/>
<dbReference type="eggNOG" id="KOG3520">
    <property type="taxonomic scope" value="Eukaryota"/>
</dbReference>
<dbReference type="GeneTree" id="ENSGT00940000157662"/>
<dbReference type="HOGENOM" id="CLU_003962_1_0_1"/>
<dbReference type="InParanoid" id="Q8R4H2"/>
<dbReference type="Reactome" id="R-MMU-193648">
    <property type="pathway name" value="NRAGE signals death through JNK"/>
</dbReference>
<dbReference type="Reactome" id="R-MMU-416482">
    <property type="pathway name" value="G alpha (12/13) signalling events"/>
</dbReference>
<dbReference type="Reactome" id="R-MMU-416572">
    <property type="pathway name" value="Sema4D induced cell migration and growth-cone collapse"/>
</dbReference>
<dbReference type="Reactome" id="R-MMU-8980692">
    <property type="pathway name" value="RHOA GTPase cycle"/>
</dbReference>
<dbReference type="Reactome" id="R-MMU-9013026">
    <property type="pathway name" value="RHOB GTPase cycle"/>
</dbReference>
<dbReference type="Reactome" id="R-MMU-9013106">
    <property type="pathway name" value="RHOC GTPase cycle"/>
</dbReference>
<dbReference type="Reactome" id="R-MMU-9013148">
    <property type="pathway name" value="CDC42 GTPase cycle"/>
</dbReference>
<dbReference type="BioGRID-ORCS" id="69632">
    <property type="hits" value="0 hits in 78 CRISPR screens"/>
</dbReference>
<dbReference type="CD-CODE" id="01CA17F3">
    <property type="entry name" value="Centrosome"/>
</dbReference>
<dbReference type="ChiTaRS" id="Arhgef12">
    <property type="organism name" value="mouse"/>
</dbReference>
<dbReference type="PRO" id="PR:Q8R4H2"/>
<dbReference type="Proteomes" id="UP000000589">
    <property type="component" value="Chromosome 9"/>
</dbReference>
<dbReference type="RNAct" id="Q8R4H2">
    <property type="molecule type" value="protein"/>
</dbReference>
<dbReference type="Bgee" id="ENSMUSG00000059495">
    <property type="expression patterns" value="Expressed in vestibular membrane of cochlear duct and 248 other cell types or tissues"/>
</dbReference>
<dbReference type="ExpressionAtlas" id="Q8R4H2">
    <property type="expression patterns" value="baseline and differential"/>
</dbReference>
<dbReference type="GO" id="GO:0005737">
    <property type="term" value="C:cytoplasm"/>
    <property type="evidence" value="ECO:0000266"/>
    <property type="project" value="MGI"/>
</dbReference>
<dbReference type="GO" id="GO:0016020">
    <property type="term" value="C:membrane"/>
    <property type="evidence" value="ECO:0007669"/>
    <property type="project" value="UniProtKB-SubCell"/>
</dbReference>
<dbReference type="GO" id="GO:0001664">
    <property type="term" value="F:G protein-coupled receptor binding"/>
    <property type="evidence" value="ECO:0000266"/>
    <property type="project" value="MGI"/>
</dbReference>
<dbReference type="GO" id="GO:0005096">
    <property type="term" value="F:GTPase activator activity"/>
    <property type="evidence" value="ECO:0007669"/>
    <property type="project" value="UniProtKB-KW"/>
</dbReference>
<dbReference type="GO" id="GO:0005085">
    <property type="term" value="F:guanyl-nucleotide exchange factor activity"/>
    <property type="evidence" value="ECO:0007669"/>
    <property type="project" value="UniProtKB-KW"/>
</dbReference>
<dbReference type="GO" id="GO:0007186">
    <property type="term" value="P:G protein-coupled receptor signaling pathway"/>
    <property type="evidence" value="ECO:0000266"/>
    <property type="project" value="MGI"/>
</dbReference>
<dbReference type="GO" id="GO:0008217">
    <property type="term" value="P:regulation of blood pressure"/>
    <property type="evidence" value="ECO:0000315"/>
    <property type="project" value="MGI"/>
</dbReference>
<dbReference type="GO" id="GO:0007266">
    <property type="term" value="P:Rho protein signal transduction"/>
    <property type="evidence" value="ECO:0007669"/>
    <property type="project" value="InterPro"/>
</dbReference>
<dbReference type="CDD" id="cd23069">
    <property type="entry name" value="PDZ_ARHGEF11-12-like"/>
    <property type="match status" value="1"/>
</dbReference>
<dbReference type="CDD" id="cd13390">
    <property type="entry name" value="PH_LARG"/>
    <property type="match status" value="1"/>
</dbReference>
<dbReference type="CDD" id="cd08754">
    <property type="entry name" value="RGS_LARG"/>
    <property type="match status" value="1"/>
</dbReference>
<dbReference type="CDD" id="cd00160">
    <property type="entry name" value="RhoGEF"/>
    <property type="match status" value="1"/>
</dbReference>
<dbReference type="FunFam" id="1.20.900.10:FF:000006">
    <property type="entry name" value="Rho guanine nucleotide exchange factor (GEF) 11"/>
    <property type="match status" value="1"/>
</dbReference>
<dbReference type="FunFam" id="2.30.42.10:FF:000033">
    <property type="entry name" value="Rho guanine nucleotide exchange factor (GEF) 11"/>
    <property type="match status" value="1"/>
</dbReference>
<dbReference type="FunFam" id="2.30.29.30:FF:000072">
    <property type="entry name" value="Rho guanine nucleotide exchange factor 1"/>
    <property type="match status" value="1"/>
</dbReference>
<dbReference type="FunFam" id="1.10.167.10:FF:000008">
    <property type="entry name" value="rho guanine nucleotide exchange factor 12"/>
    <property type="match status" value="1"/>
</dbReference>
<dbReference type="Gene3D" id="2.30.42.10">
    <property type="match status" value="1"/>
</dbReference>
<dbReference type="Gene3D" id="1.20.900.10">
    <property type="entry name" value="Dbl homology (DH) domain"/>
    <property type="match status" value="1"/>
</dbReference>
<dbReference type="Gene3D" id="2.30.29.30">
    <property type="entry name" value="Pleckstrin-homology domain (PH domain)/Phosphotyrosine-binding domain (PTB)"/>
    <property type="match status" value="1"/>
</dbReference>
<dbReference type="Gene3D" id="1.10.167.10">
    <property type="entry name" value="Regulator of G-protein Signalling 4, domain 2"/>
    <property type="match status" value="1"/>
</dbReference>
<dbReference type="InterPro" id="IPR037801">
    <property type="entry name" value="ARHGEF12_PH"/>
</dbReference>
<dbReference type="InterPro" id="IPR035899">
    <property type="entry name" value="DBL_dom_sf"/>
</dbReference>
<dbReference type="InterPro" id="IPR000219">
    <property type="entry name" value="DH_dom"/>
</dbReference>
<dbReference type="InterPro" id="IPR001331">
    <property type="entry name" value="GDS_CDC24_CS"/>
</dbReference>
<dbReference type="InterPro" id="IPR037884">
    <property type="entry name" value="LARG_RGS"/>
</dbReference>
<dbReference type="InterPro" id="IPR001478">
    <property type="entry name" value="PDZ"/>
</dbReference>
<dbReference type="InterPro" id="IPR036034">
    <property type="entry name" value="PDZ_sf"/>
</dbReference>
<dbReference type="InterPro" id="IPR011993">
    <property type="entry name" value="PH-like_dom_sf"/>
</dbReference>
<dbReference type="InterPro" id="IPR041020">
    <property type="entry name" value="PH_16"/>
</dbReference>
<dbReference type="InterPro" id="IPR001849">
    <property type="entry name" value="PH_domain"/>
</dbReference>
<dbReference type="InterPro" id="IPR015212">
    <property type="entry name" value="RGS-like_dom"/>
</dbReference>
<dbReference type="InterPro" id="IPR036305">
    <property type="entry name" value="RGS_sf"/>
</dbReference>
<dbReference type="InterPro" id="IPR044926">
    <property type="entry name" value="RGS_subdomain_2"/>
</dbReference>
<dbReference type="PANTHER" id="PTHR45872:SF3">
    <property type="entry name" value="RHO GUANINE NUCLEOTIDE EXCHANGE FACTOR 12"/>
    <property type="match status" value="1"/>
</dbReference>
<dbReference type="PANTHER" id="PTHR45872">
    <property type="entry name" value="RHO GUANINE NUCLEOTIDE EXCHANGE FACTOR 2, ISOFORM D"/>
    <property type="match status" value="1"/>
</dbReference>
<dbReference type="Pfam" id="PF00595">
    <property type="entry name" value="PDZ"/>
    <property type="match status" value="1"/>
</dbReference>
<dbReference type="Pfam" id="PF17838">
    <property type="entry name" value="PH_16"/>
    <property type="match status" value="1"/>
</dbReference>
<dbReference type="Pfam" id="PF09128">
    <property type="entry name" value="RGS-like"/>
    <property type="match status" value="1"/>
</dbReference>
<dbReference type="Pfam" id="PF00621">
    <property type="entry name" value="RhoGEF"/>
    <property type="match status" value="1"/>
</dbReference>
<dbReference type="SMART" id="SM00228">
    <property type="entry name" value="PDZ"/>
    <property type="match status" value="1"/>
</dbReference>
<dbReference type="SMART" id="SM00233">
    <property type="entry name" value="PH"/>
    <property type="match status" value="1"/>
</dbReference>
<dbReference type="SMART" id="SM00325">
    <property type="entry name" value="RhoGEF"/>
    <property type="match status" value="1"/>
</dbReference>
<dbReference type="SUPFAM" id="SSF48065">
    <property type="entry name" value="DBL homology domain (DH-domain)"/>
    <property type="match status" value="1"/>
</dbReference>
<dbReference type="SUPFAM" id="SSF50156">
    <property type="entry name" value="PDZ domain-like"/>
    <property type="match status" value="1"/>
</dbReference>
<dbReference type="SUPFAM" id="SSF50729">
    <property type="entry name" value="PH domain-like"/>
    <property type="match status" value="1"/>
</dbReference>
<dbReference type="SUPFAM" id="SSF48097">
    <property type="entry name" value="Regulator of G-protein signaling, RGS"/>
    <property type="match status" value="1"/>
</dbReference>
<dbReference type="PROSITE" id="PS00741">
    <property type="entry name" value="DH_1"/>
    <property type="match status" value="1"/>
</dbReference>
<dbReference type="PROSITE" id="PS50010">
    <property type="entry name" value="DH_2"/>
    <property type="match status" value="1"/>
</dbReference>
<dbReference type="PROSITE" id="PS50106">
    <property type="entry name" value="PDZ"/>
    <property type="match status" value="1"/>
</dbReference>
<dbReference type="PROSITE" id="PS50003">
    <property type="entry name" value="PH_DOMAIN"/>
    <property type="match status" value="1"/>
</dbReference>
<accession>Q8R4H2</accession>
<accession>E9QPW9</accession>
<accession>Q80U18</accession>
<comment type="function">
    <text evidence="1">May play a role in the regulation of RhoA GTPase by guanine nucleotide-binding alpha-12 (GNA12) and alpha-13 (GNA13). Acts as guanine nucleotide exchange factor (GEF) for RhoA GTPase and may act as GTPase-activating protein (GAP) for GNA12 and GNA13 (By similarity).</text>
</comment>
<comment type="subunit">
    <text evidence="1 2">Interacts with GNA12 and GNA13, probably through the RGS-like domain, with RHOA, PLXNB1 and PLXNB2, and through its PDZ domain with IGF1R beta subunit. Interacts with GCSAM. Found in a complex with ARHGEF11 and ARHGEF12; binding to ARHGEF11 and ARHGEF12 enhances CDC42 GEF activity of PLEKHG4B, and PLEKHG4B, in turn, inhibits ARHGEF11- and ARHGEF12-mediated RHOA activation (By similarity).</text>
</comment>
<comment type="interaction">
    <interactant intactId="EBI-8046267">
        <id>Q8R4H2</id>
    </interactant>
    <interactant intactId="EBI-2637650">
        <id>Q8CJH3</id>
        <label>Plxnb1</label>
    </interactant>
    <organismsDiffer>false</organismsDiffer>
    <experiments>2</experiments>
</comment>
<comment type="subcellular location">
    <subcellularLocation>
        <location evidence="9">Cytoplasm</location>
    </subcellularLocation>
    <subcellularLocation>
        <location evidence="9">Membrane</location>
    </subcellularLocation>
    <text evidence="9">Translocated to the membrane upon stimulation.</text>
</comment>
<comment type="tissue specificity">
    <text evidence="8">Expressed in brain, predominantly in neuronal cell bodies.</text>
</comment>
<comment type="sequence caution" evidence="9">
    <conflict type="erroneous initiation">
        <sequence resource="EMBL-CDS" id="BAC65549"/>
    </conflict>
    <text>Extended N-terminus.</text>
</comment>
<proteinExistence type="evidence at protein level"/>
<sequence>MSGTQSTITDRFPLKKPIRHGSILNRESPTDKKQKVERSSSHDFDPTDSSSKKTKSSSEESRSEIYGLVQRCVIIQKDDNGFGLTVSGDNPVFVQSVKEDGAAMRAGVQTGDRIIKVNGTLVTHSNHLEVVKLIRSGSYVALTVQGRPPGSPQIPLADSEVEPSVTGHMSPIMTSPHSPGAAGNMERITSPVLVGEENNVVHNQKVEILRKMLQKEQERLQLLQEDYNRTATQRLLKEIQEAKKHIPQLQEQLSKATGSAQDGAVIAPSRPLGDALTLSEAEADPGDGLCRTDWSSGDASRPSSDSADSPKSSLRERSYLEEAPERSEGVQDAEPQSLVGSPSTRGAPHIIGAEDDDFGTEHEQINGQCSCFQSIELLKSRPAHLAVFLHHVVSQFDPATLLCYLYSDLYKQTNSKETRRVFLEFHQFFLDRSAHLKVPVPEEISVDLEKRRPELIPEDLHRLYIQTMQERVHPEVQRHLEDFRQKRSMGLTLAESELTKLDAERDKDRGTLEKERACAEQIVTKIEEVLMTAQAVEEERSSTMQYVILMYMKYLGVKVKEPRNLEHKRGRIGFLPKIKQSMKKDREGEEKGKRRGFPSILGPPRRPSRHDNSAIGRAMEIQKSRHPKHLSTPSSVSPEPQDPAKLRQSGVANEGTDTGYLPASSMSSATSGTALSQEGGRENDTGTKQVGEASAPGDCLDSTPRVPTTVFDFPPPLLDQVQEEECEVERVAEHGTPKPFRKFDSIAFGESQSEDEQFENDLETDPPNWQQLVSREVLLGLKPSEIKRQEVINELFYTERAHVRTLKVLDQVFYQRVSREGILSPSELRKIFSNLEDILQLHVGLNEQMKAVRKRNETSVIDHIGEDLLIWFSGPGEEKLKHAAATFCSNQPFALEMIKSRQKKDSRFHTFVQDAESNPLCRRLQLKDIIPTQMQRLTKYPLLLDNIAKYTEWPPEREKVKKAADHCRQILNYVNQAVREAENKQRLEDYQRRLDTSNLKLSEYPNVDELRNLDLTKRKMIHEGPLVWKVNRDKSIDLYTLLLEDILVLLQKQDDRLVLRCHSKILASTADSKHTFSPVIKLSTVLVRQVATDNKALFVISMSDNGAQIYELVAQTVSEKTVWQDLICRMAASVKEQSTKPIPLPQPPPCEGDNDEEEPAKLKVEHHDLSVAGLQSPDRVLGLESPLISSKPQSHSLNTPGKSAAEHLFVTATQFAKEQHANGALKEGDGGYPVTIPGPHLPVSEERWALDALRNLGLLKQLLVQQLGLTEKSTQEDWQSFSRYGPASEEVQADSGIRDLENVKACHAREGQMSFKTGTGDIATCDSPRTSTESCAAQDSVILASQDSQASNVLVMDHMILTPEMPPAEPEGGLDESGEHFFDAREAHSDDNPSEGDGAVKKEEKDVNLRISGNCLILDGYDAVQESSTDEEVASSFPLQPVTGIPAVDSSHQQQHSPQNVHPEGPVSPFTPEFLVQRHWRAMEDTCFEIQSPSCTDSQSQILEYIHKIEADLEHLKKVEESYALLCQRLAGSALPDKLSDKS</sequence>
<evidence type="ECO:0000250" key="1"/>
<evidence type="ECO:0000250" key="2">
    <source>
        <dbReference type="UniProtKB" id="Q9NZN5"/>
    </source>
</evidence>
<evidence type="ECO:0000255" key="3"/>
<evidence type="ECO:0000255" key="4">
    <source>
        <dbReference type="PROSITE-ProRule" id="PRU00062"/>
    </source>
</evidence>
<evidence type="ECO:0000255" key="5">
    <source>
        <dbReference type="PROSITE-ProRule" id="PRU00143"/>
    </source>
</evidence>
<evidence type="ECO:0000255" key="6">
    <source>
        <dbReference type="PROSITE-ProRule" id="PRU00145"/>
    </source>
</evidence>
<evidence type="ECO:0000256" key="7">
    <source>
        <dbReference type="SAM" id="MobiDB-lite"/>
    </source>
</evidence>
<evidence type="ECO:0000269" key="8">
    <source>
    </source>
</evidence>
<evidence type="ECO:0000305" key="9"/>
<evidence type="ECO:0007744" key="10">
    <source>
    </source>
</evidence>
<evidence type="ECO:0007744" key="11">
    <source>
    </source>
</evidence>
<name>ARHGC_MOUSE</name>
<feature type="initiator methionine" description="Removed" evidence="2">
    <location>
        <position position="1"/>
    </location>
</feature>
<feature type="chain" id="PRO_0000080931" description="Rho guanine nucleotide exchange factor 12">
    <location>
        <begin position="2"/>
        <end position="1543"/>
    </location>
</feature>
<feature type="domain" description="PDZ" evidence="5">
    <location>
        <begin position="72"/>
        <end position="151"/>
    </location>
</feature>
<feature type="domain" description="RGSL">
    <location>
        <begin position="367"/>
        <end position="558"/>
    </location>
</feature>
<feature type="domain" description="DH" evidence="4">
    <location>
        <begin position="787"/>
        <end position="977"/>
    </location>
</feature>
<feature type="domain" description="PH" evidence="6">
    <location>
        <begin position="1019"/>
        <end position="1132"/>
    </location>
</feature>
<feature type="region of interest" description="Disordered" evidence="7">
    <location>
        <begin position="1"/>
        <end position="62"/>
    </location>
</feature>
<feature type="region of interest" description="Disordered" evidence="7">
    <location>
        <begin position="281"/>
        <end position="355"/>
    </location>
</feature>
<feature type="region of interest" description="Disordered" evidence="7">
    <location>
        <begin position="574"/>
        <end position="710"/>
    </location>
</feature>
<feature type="region of interest" description="Disordered" evidence="7">
    <location>
        <begin position="1137"/>
        <end position="1158"/>
    </location>
</feature>
<feature type="region of interest" description="Disordered" evidence="7">
    <location>
        <begin position="1386"/>
        <end position="1405"/>
    </location>
</feature>
<feature type="region of interest" description="Disordered" evidence="7">
    <location>
        <begin position="1441"/>
        <end position="1468"/>
    </location>
</feature>
<feature type="coiled-coil region" evidence="3">
    <location>
        <begin position="194"/>
        <end position="262"/>
    </location>
</feature>
<feature type="coiled-coil region" evidence="3">
    <location>
        <begin position="981"/>
        <end position="1004"/>
    </location>
</feature>
<feature type="compositionally biased region" description="Basic and acidic residues" evidence="7">
    <location>
        <begin position="28"/>
        <end position="45"/>
    </location>
</feature>
<feature type="compositionally biased region" description="Low complexity" evidence="7">
    <location>
        <begin position="293"/>
        <end position="312"/>
    </location>
</feature>
<feature type="compositionally biased region" description="Basic and acidic residues" evidence="7">
    <location>
        <begin position="313"/>
        <end position="329"/>
    </location>
</feature>
<feature type="compositionally biased region" description="Basic and acidic residues" evidence="7">
    <location>
        <begin position="582"/>
        <end position="592"/>
    </location>
</feature>
<feature type="compositionally biased region" description="Low complexity" evidence="7">
    <location>
        <begin position="663"/>
        <end position="676"/>
    </location>
</feature>
<feature type="compositionally biased region" description="Polar residues" evidence="7">
    <location>
        <begin position="1450"/>
        <end position="1460"/>
    </location>
</feature>
<feature type="modified residue" description="N-acetylserine" evidence="2">
    <location>
        <position position="2"/>
    </location>
</feature>
<feature type="modified residue" description="Phosphoserine" evidence="2">
    <location>
        <position position="41"/>
    </location>
</feature>
<feature type="modified residue" description="Phosphoserine" evidence="11">
    <location>
        <position position="309"/>
    </location>
</feature>
<feature type="modified residue" description="Phosphoserine" evidence="2">
    <location>
        <position position="341"/>
    </location>
</feature>
<feature type="modified residue" description="Phosphoserine" evidence="2">
    <location>
        <position position="637"/>
    </location>
</feature>
<feature type="modified residue" description="Phosphothreonine" evidence="2">
    <location>
        <position position="736"/>
    </location>
</feature>
<feature type="modified residue" description="Phosphoserine" evidence="2">
    <location>
        <position position="1288"/>
    </location>
</feature>
<feature type="modified residue" description="Phosphoserine" evidence="10 11">
    <location>
        <position position="1327"/>
    </location>
</feature>
<feature type="modified residue" description="Phosphoserine" evidence="2">
    <location>
        <position position="1377"/>
    </location>
</feature>
<feature type="modified residue" description="Phosphoserine" evidence="2">
    <location>
        <position position="1457"/>
    </location>
</feature>
<feature type="modified residue" description="Phosphoserine" evidence="2">
    <location>
        <position position="1540"/>
    </location>
</feature>
<feature type="sequence conflict" description="In Ref. 2; BAC65549." evidence="9" ref="2">
    <original>A</original>
    <variation>V</variation>
    <location>
        <position position="307"/>
    </location>
</feature>
<feature type="sequence conflict" description="In Ref. 1; AAL87100." evidence="9" ref="1">
    <original>L</original>
    <variation>S</variation>
    <location>
        <position position="320"/>
    </location>
</feature>
<feature type="sequence conflict" description="In Ref. 2; BAC65549." evidence="9" ref="2">
    <original>E</original>
    <variation>QE</variation>
    <location>
        <position position="334"/>
    </location>
</feature>
<feature type="sequence conflict" description="In Ref. 2; BAC65549." evidence="9" ref="2">
    <original>A</original>
    <variation>T</variation>
    <location>
        <position position="1447"/>
    </location>
</feature>
<keyword id="KW-0007">Acetylation</keyword>
<keyword id="KW-0175">Coiled coil</keyword>
<keyword id="KW-0963">Cytoplasm</keyword>
<keyword id="KW-0343">GTPase activation</keyword>
<keyword id="KW-0344">Guanine-nucleotide releasing factor</keyword>
<keyword id="KW-0472">Membrane</keyword>
<keyword id="KW-0597">Phosphoprotein</keyword>
<keyword id="KW-1185">Reference proteome</keyword>
<reference key="1">
    <citation type="submission" date="2002-01" db="EMBL/GenBank/DDBJ databases">
        <title>A novel murine gene encoding guanine nucleotide exchange factor and expressed in non-differentiated hematopoietic cells.</title>
        <authorList>
            <person name="Zinovyeva M.V."/>
            <person name="Sveshnikova E.V."/>
            <person name="Visser J.M."/>
            <person name="Belyavsky A.V."/>
        </authorList>
    </citation>
    <scope>NUCLEOTIDE SEQUENCE [MRNA]</scope>
</reference>
<reference key="2">
    <citation type="journal article" date="2003" name="DNA Res.">
        <title>Prediction of the coding sequences of mouse homologues of KIAA gene: II. The complete nucleotide sequences of 400 mouse KIAA-homologous cDNAs identified by screening of terminal sequences of cDNA clones randomly sampled from size-fractionated libraries.</title>
        <authorList>
            <person name="Okazaki N."/>
            <person name="Kikuno R."/>
            <person name="Ohara R."/>
            <person name="Inamoto S."/>
            <person name="Aizawa H."/>
            <person name="Yuasa S."/>
            <person name="Nakajima D."/>
            <person name="Nagase T."/>
            <person name="Ohara O."/>
            <person name="Koga H."/>
        </authorList>
    </citation>
    <scope>NUCLEOTIDE SEQUENCE [LARGE SCALE MRNA]</scope>
    <source>
        <tissue>Brain</tissue>
    </source>
</reference>
<reference key="3">
    <citation type="journal article" date="2009" name="PLoS Biol.">
        <title>Lineage-specific biology revealed by a finished genome assembly of the mouse.</title>
        <authorList>
            <person name="Church D.M."/>
            <person name="Goodstadt L."/>
            <person name="Hillier L.W."/>
            <person name="Zody M.C."/>
            <person name="Goldstein S."/>
            <person name="She X."/>
            <person name="Bult C.J."/>
            <person name="Agarwala R."/>
            <person name="Cherry J.L."/>
            <person name="DiCuccio M."/>
            <person name="Hlavina W."/>
            <person name="Kapustin Y."/>
            <person name="Meric P."/>
            <person name="Maglott D."/>
            <person name="Birtle Z."/>
            <person name="Marques A.C."/>
            <person name="Graves T."/>
            <person name="Zhou S."/>
            <person name="Teague B."/>
            <person name="Potamousis K."/>
            <person name="Churas C."/>
            <person name="Place M."/>
            <person name="Herschleb J."/>
            <person name="Runnheim R."/>
            <person name="Forrest D."/>
            <person name="Amos-Landgraf J."/>
            <person name="Schwartz D.C."/>
            <person name="Cheng Z."/>
            <person name="Lindblad-Toh K."/>
            <person name="Eichler E.E."/>
            <person name="Ponting C.P."/>
        </authorList>
    </citation>
    <scope>NUCLEOTIDE SEQUENCE [LARGE SCALE GENOMIC DNA]</scope>
    <source>
        <strain>C57BL/6J</strain>
    </source>
</reference>
<reference key="4">
    <citation type="journal article" date="2002" name="Eur. J. Neurosci.">
        <title>Characterization of the expression of PDZ-RhoGEF, LARG and G(alpha)12/G(alpha)13 proteins in the murine nervous system.</title>
        <authorList>
            <person name="Kuner R."/>
            <person name="Swiercz J.M."/>
            <person name="Zywietz A."/>
            <person name="Tappe A."/>
            <person name="Offermanns S."/>
        </authorList>
    </citation>
    <scope>TISSUE SPECIFICITY</scope>
</reference>
<reference key="5">
    <citation type="journal article" date="2007" name="Proc. Natl. Acad. Sci. U.S.A.">
        <title>Large-scale phosphorylation analysis of mouse liver.</title>
        <authorList>
            <person name="Villen J."/>
            <person name="Beausoleil S.A."/>
            <person name="Gerber S.A."/>
            <person name="Gygi S.P."/>
        </authorList>
    </citation>
    <scope>PHOSPHORYLATION [LARGE SCALE ANALYSIS] AT SER-1327</scope>
    <scope>IDENTIFICATION BY MASS SPECTROMETRY [LARGE SCALE ANALYSIS]</scope>
    <source>
        <tissue>Liver</tissue>
    </source>
</reference>
<reference key="6">
    <citation type="journal article" date="2010" name="Cell">
        <title>A tissue-specific atlas of mouse protein phosphorylation and expression.</title>
        <authorList>
            <person name="Huttlin E.L."/>
            <person name="Jedrychowski M.P."/>
            <person name="Elias J.E."/>
            <person name="Goswami T."/>
            <person name="Rad R."/>
            <person name="Beausoleil S.A."/>
            <person name="Villen J."/>
            <person name="Haas W."/>
            <person name="Sowa M.E."/>
            <person name="Gygi S.P."/>
        </authorList>
    </citation>
    <scope>PHOSPHORYLATION [LARGE SCALE ANALYSIS] AT SER-309 AND SER-1327</scope>
    <scope>IDENTIFICATION BY MASS SPECTROMETRY [LARGE SCALE ANALYSIS]</scope>
    <source>
        <tissue>Brain</tissue>
        <tissue>Brown adipose tissue</tissue>
        <tissue>Heart</tissue>
        <tissue>Kidney</tissue>
        <tissue>Liver</tissue>
        <tissue>Lung</tissue>
        <tissue>Pancreas</tissue>
        <tissue>Spleen</tissue>
        <tissue>Testis</tissue>
    </source>
</reference>
<gene>
    <name type="primary">Arhgef12</name>
    <name type="synonym">Kiaa0382</name>
    <name type="synonym">Larg</name>
</gene>
<organism>
    <name type="scientific">Mus musculus</name>
    <name type="common">Mouse</name>
    <dbReference type="NCBI Taxonomy" id="10090"/>
    <lineage>
        <taxon>Eukaryota</taxon>
        <taxon>Metazoa</taxon>
        <taxon>Chordata</taxon>
        <taxon>Craniata</taxon>
        <taxon>Vertebrata</taxon>
        <taxon>Euteleostomi</taxon>
        <taxon>Mammalia</taxon>
        <taxon>Eutheria</taxon>
        <taxon>Euarchontoglires</taxon>
        <taxon>Glires</taxon>
        <taxon>Rodentia</taxon>
        <taxon>Myomorpha</taxon>
        <taxon>Muroidea</taxon>
        <taxon>Muridae</taxon>
        <taxon>Murinae</taxon>
        <taxon>Mus</taxon>
        <taxon>Mus</taxon>
    </lineage>
</organism>